<dbReference type="EC" id="1.1.1.267" evidence="1"/>
<dbReference type="EMBL" id="CP001139">
    <property type="protein sequence ID" value="ACH65841.1"/>
    <property type="molecule type" value="Genomic_DNA"/>
</dbReference>
<dbReference type="RefSeq" id="WP_012533318.1">
    <property type="nucleotide sequence ID" value="NC_011184.1"/>
</dbReference>
<dbReference type="SMR" id="B5F9X0"/>
<dbReference type="KEGG" id="vfm:VFMJ11_2090"/>
<dbReference type="HOGENOM" id="CLU_035714_4_0_6"/>
<dbReference type="UniPathway" id="UPA00056">
    <property type="reaction ID" value="UER00092"/>
</dbReference>
<dbReference type="Proteomes" id="UP000001857">
    <property type="component" value="Chromosome I"/>
</dbReference>
<dbReference type="GO" id="GO:0030604">
    <property type="term" value="F:1-deoxy-D-xylulose-5-phosphate reductoisomerase activity"/>
    <property type="evidence" value="ECO:0007669"/>
    <property type="project" value="UniProtKB-UniRule"/>
</dbReference>
<dbReference type="GO" id="GO:0030145">
    <property type="term" value="F:manganese ion binding"/>
    <property type="evidence" value="ECO:0007669"/>
    <property type="project" value="TreeGrafter"/>
</dbReference>
<dbReference type="GO" id="GO:0070402">
    <property type="term" value="F:NADPH binding"/>
    <property type="evidence" value="ECO:0007669"/>
    <property type="project" value="InterPro"/>
</dbReference>
<dbReference type="GO" id="GO:0051484">
    <property type="term" value="P:isopentenyl diphosphate biosynthetic process, methylerythritol 4-phosphate pathway involved in terpenoid biosynthetic process"/>
    <property type="evidence" value="ECO:0007669"/>
    <property type="project" value="TreeGrafter"/>
</dbReference>
<dbReference type="FunFam" id="1.10.1740.10:FF:000004">
    <property type="entry name" value="1-deoxy-D-xylulose 5-phosphate reductoisomerase"/>
    <property type="match status" value="1"/>
</dbReference>
<dbReference type="FunFam" id="3.40.50.720:FF:000045">
    <property type="entry name" value="1-deoxy-D-xylulose 5-phosphate reductoisomerase"/>
    <property type="match status" value="1"/>
</dbReference>
<dbReference type="Gene3D" id="1.10.1740.10">
    <property type="match status" value="1"/>
</dbReference>
<dbReference type="Gene3D" id="3.40.50.720">
    <property type="entry name" value="NAD(P)-binding Rossmann-like Domain"/>
    <property type="match status" value="1"/>
</dbReference>
<dbReference type="HAMAP" id="MF_00183">
    <property type="entry name" value="DXP_reductoisom"/>
    <property type="match status" value="1"/>
</dbReference>
<dbReference type="InterPro" id="IPR003821">
    <property type="entry name" value="DXP_reductoisomerase"/>
</dbReference>
<dbReference type="InterPro" id="IPR013644">
    <property type="entry name" value="DXP_reductoisomerase_C"/>
</dbReference>
<dbReference type="InterPro" id="IPR013512">
    <property type="entry name" value="DXP_reductoisomerase_N"/>
</dbReference>
<dbReference type="InterPro" id="IPR026877">
    <property type="entry name" value="DXPR_C"/>
</dbReference>
<dbReference type="InterPro" id="IPR036169">
    <property type="entry name" value="DXPR_C_sf"/>
</dbReference>
<dbReference type="InterPro" id="IPR036291">
    <property type="entry name" value="NAD(P)-bd_dom_sf"/>
</dbReference>
<dbReference type="NCBIfam" id="TIGR00243">
    <property type="entry name" value="Dxr"/>
    <property type="match status" value="1"/>
</dbReference>
<dbReference type="NCBIfam" id="NF003938">
    <property type="entry name" value="PRK05447.1-1"/>
    <property type="match status" value="1"/>
</dbReference>
<dbReference type="NCBIfam" id="NF009114">
    <property type="entry name" value="PRK12464.1"/>
    <property type="match status" value="1"/>
</dbReference>
<dbReference type="PANTHER" id="PTHR30525">
    <property type="entry name" value="1-DEOXY-D-XYLULOSE 5-PHOSPHATE REDUCTOISOMERASE"/>
    <property type="match status" value="1"/>
</dbReference>
<dbReference type="PANTHER" id="PTHR30525:SF0">
    <property type="entry name" value="1-DEOXY-D-XYLULOSE 5-PHOSPHATE REDUCTOISOMERASE, CHLOROPLASTIC"/>
    <property type="match status" value="1"/>
</dbReference>
<dbReference type="Pfam" id="PF08436">
    <property type="entry name" value="DXP_redisom_C"/>
    <property type="match status" value="1"/>
</dbReference>
<dbReference type="Pfam" id="PF02670">
    <property type="entry name" value="DXP_reductoisom"/>
    <property type="match status" value="1"/>
</dbReference>
<dbReference type="Pfam" id="PF13288">
    <property type="entry name" value="DXPR_C"/>
    <property type="match status" value="1"/>
</dbReference>
<dbReference type="PIRSF" id="PIRSF006205">
    <property type="entry name" value="Dxp_reductismrs"/>
    <property type="match status" value="1"/>
</dbReference>
<dbReference type="SUPFAM" id="SSF69055">
    <property type="entry name" value="1-deoxy-D-xylulose-5-phosphate reductoisomerase, C-terminal domain"/>
    <property type="match status" value="1"/>
</dbReference>
<dbReference type="SUPFAM" id="SSF55347">
    <property type="entry name" value="Glyceraldehyde-3-phosphate dehydrogenase-like, C-terminal domain"/>
    <property type="match status" value="1"/>
</dbReference>
<dbReference type="SUPFAM" id="SSF51735">
    <property type="entry name" value="NAD(P)-binding Rossmann-fold domains"/>
    <property type="match status" value="1"/>
</dbReference>
<proteinExistence type="inferred from homology"/>
<gene>
    <name evidence="1" type="primary">dxr</name>
    <name type="ordered locus">VFMJ11_2090</name>
</gene>
<protein>
    <recommendedName>
        <fullName evidence="1">1-deoxy-D-xylulose 5-phosphate reductoisomerase</fullName>
        <shortName evidence="1">DXP reductoisomerase</shortName>
        <ecNumber evidence="1">1.1.1.267</ecNumber>
    </recommendedName>
    <alternativeName>
        <fullName evidence="1">1-deoxyxylulose-5-phosphate reductoisomerase</fullName>
    </alternativeName>
    <alternativeName>
        <fullName evidence="1">2-C-methyl-D-erythritol 4-phosphate synthase</fullName>
    </alternativeName>
</protein>
<reference key="1">
    <citation type="submission" date="2008-08" db="EMBL/GenBank/DDBJ databases">
        <title>Complete sequence of Vibrio fischeri strain MJ11.</title>
        <authorList>
            <person name="Mandel M.J."/>
            <person name="Stabb E.V."/>
            <person name="Ruby E.G."/>
            <person name="Ferriera S."/>
            <person name="Johnson J."/>
            <person name="Kravitz S."/>
            <person name="Beeson K."/>
            <person name="Sutton G."/>
            <person name="Rogers Y.-H."/>
            <person name="Friedman R."/>
            <person name="Frazier M."/>
            <person name="Venter J.C."/>
        </authorList>
    </citation>
    <scope>NUCLEOTIDE SEQUENCE [LARGE SCALE GENOMIC DNA]</scope>
    <source>
        <strain>MJ11</strain>
    </source>
</reference>
<name>DXR_ALIFM</name>
<accession>B5F9X0</accession>
<keyword id="KW-0414">Isoprene biosynthesis</keyword>
<keyword id="KW-0464">Manganese</keyword>
<keyword id="KW-0479">Metal-binding</keyword>
<keyword id="KW-0521">NADP</keyword>
<keyword id="KW-0560">Oxidoreductase</keyword>
<sequence length="400" mass="43351">MRKLTILGATGSIGSSTLSVAQQNSDQFEIVALGAGTNVDKMLELCLEWKPKYVAMATQPAADALKELLSAHAINAEVFSGEDGLCHIAQLDEVDTVMAAIVGAAGLLPTMSAVKASKRILLANKEALVMSGQLFIDAVEKYGAELLPVDSEHNAIFQCLPQSIQTNLGRCDLEEHGVSSILLTGSGGPFRYTDVSELEAVTPEMAIAHPNWSMGPKISVDSATMMNKGLEYIEARWLFNASKEQLKVVIHPQSVIHSMVQYKDGSVLAQMGLPDMRTPIACTMSYPKRVNAGVEPLDFTKVGEFTFIAPDFSRYPCLKLAIDACYLGQHATTGLNAANEQAVAAFLANKIKFTDIARINEAVLHKVCANFQNLELDSLESLIDLDRMARRYADEAINKV</sequence>
<organism>
    <name type="scientific">Aliivibrio fischeri (strain MJ11)</name>
    <name type="common">Vibrio fischeri</name>
    <dbReference type="NCBI Taxonomy" id="388396"/>
    <lineage>
        <taxon>Bacteria</taxon>
        <taxon>Pseudomonadati</taxon>
        <taxon>Pseudomonadota</taxon>
        <taxon>Gammaproteobacteria</taxon>
        <taxon>Vibrionales</taxon>
        <taxon>Vibrionaceae</taxon>
        <taxon>Aliivibrio</taxon>
    </lineage>
</organism>
<evidence type="ECO:0000255" key="1">
    <source>
        <dbReference type="HAMAP-Rule" id="MF_00183"/>
    </source>
</evidence>
<comment type="function">
    <text evidence="1">Catalyzes the NADPH-dependent rearrangement and reduction of 1-deoxy-D-xylulose-5-phosphate (DXP) to 2-C-methyl-D-erythritol 4-phosphate (MEP).</text>
</comment>
<comment type="catalytic activity">
    <reaction evidence="1">
        <text>2-C-methyl-D-erythritol 4-phosphate + NADP(+) = 1-deoxy-D-xylulose 5-phosphate + NADPH + H(+)</text>
        <dbReference type="Rhea" id="RHEA:13717"/>
        <dbReference type="ChEBI" id="CHEBI:15378"/>
        <dbReference type="ChEBI" id="CHEBI:57783"/>
        <dbReference type="ChEBI" id="CHEBI:57792"/>
        <dbReference type="ChEBI" id="CHEBI:58262"/>
        <dbReference type="ChEBI" id="CHEBI:58349"/>
        <dbReference type="EC" id="1.1.1.267"/>
    </reaction>
    <physiologicalReaction direction="right-to-left" evidence="1">
        <dbReference type="Rhea" id="RHEA:13719"/>
    </physiologicalReaction>
</comment>
<comment type="cofactor">
    <cofactor evidence="1">
        <name>Mg(2+)</name>
        <dbReference type="ChEBI" id="CHEBI:18420"/>
    </cofactor>
    <cofactor evidence="1">
        <name>Mn(2+)</name>
        <dbReference type="ChEBI" id="CHEBI:29035"/>
    </cofactor>
</comment>
<comment type="pathway">
    <text evidence="1">Isoprenoid biosynthesis; isopentenyl diphosphate biosynthesis via DXP pathway; isopentenyl diphosphate from 1-deoxy-D-xylulose 5-phosphate: step 1/6.</text>
</comment>
<comment type="similarity">
    <text evidence="1">Belongs to the DXR family.</text>
</comment>
<feature type="chain" id="PRO_1000098524" description="1-deoxy-D-xylulose 5-phosphate reductoisomerase">
    <location>
        <begin position="1"/>
        <end position="400"/>
    </location>
</feature>
<feature type="binding site" evidence="1">
    <location>
        <position position="10"/>
    </location>
    <ligand>
        <name>NADPH</name>
        <dbReference type="ChEBI" id="CHEBI:57783"/>
    </ligand>
</feature>
<feature type="binding site" evidence="1">
    <location>
        <position position="11"/>
    </location>
    <ligand>
        <name>NADPH</name>
        <dbReference type="ChEBI" id="CHEBI:57783"/>
    </ligand>
</feature>
<feature type="binding site" evidence="1">
    <location>
        <position position="12"/>
    </location>
    <ligand>
        <name>NADPH</name>
        <dbReference type="ChEBI" id="CHEBI:57783"/>
    </ligand>
</feature>
<feature type="binding site" evidence="1">
    <location>
        <position position="13"/>
    </location>
    <ligand>
        <name>NADPH</name>
        <dbReference type="ChEBI" id="CHEBI:57783"/>
    </ligand>
</feature>
<feature type="binding site" evidence="1">
    <location>
        <position position="36"/>
    </location>
    <ligand>
        <name>NADPH</name>
        <dbReference type="ChEBI" id="CHEBI:57783"/>
    </ligand>
</feature>
<feature type="binding site" evidence="1">
    <location>
        <position position="38"/>
    </location>
    <ligand>
        <name>NADPH</name>
        <dbReference type="ChEBI" id="CHEBI:57783"/>
    </ligand>
</feature>
<feature type="binding site" evidence="1">
    <location>
        <position position="124"/>
    </location>
    <ligand>
        <name>NADPH</name>
        <dbReference type="ChEBI" id="CHEBI:57783"/>
    </ligand>
</feature>
<feature type="binding site" evidence="1">
    <location>
        <position position="125"/>
    </location>
    <ligand>
        <name>1-deoxy-D-xylulose 5-phosphate</name>
        <dbReference type="ChEBI" id="CHEBI:57792"/>
    </ligand>
</feature>
<feature type="binding site" evidence="1">
    <location>
        <position position="126"/>
    </location>
    <ligand>
        <name>NADPH</name>
        <dbReference type="ChEBI" id="CHEBI:57783"/>
    </ligand>
</feature>
<feature type="binding site" evidence="1">
    <location>
        <position position="150"/>
    </location>
    <ligand>
        <name>Mn(2+)</name>
        <dbReference type="ChEBI" id="CHEBI:29035"/>
    </ligand>
</feature>
<feature type="binding site" evidence="1">
    <location>
        <position position="151"/>
    </location>
    <ligand>
        <name>1-deoxy-D-xylulose 5-phosphate</name>
        <dbReference type="ChEBI" id="CHEBI:57792"/>
    </ligand>
</feature>
<feature type="binding site" evidence="1">
    <location>
        <position position="152"/>
    </location>
    <ligand>
        <name>1-deoxy-D-xylulose 5-phosphate</name>
        <dbReference type="ChEBI" id="CHEBI:57792"/>
    </ligand>
</feature>
<feature type="binding site" evidence="1">
    <location>
        <position position="152"/>
    </location>
    <ligand>
        <name>Mn(2+)</name>
        <dbReference type="ChEBI" id="CHEBI:29035"/>
    </ligand>
</feature>
<feature type="binding site" evidence="1">
    <location>
        <position position="186"/>
    </location>
    <ligand>
        <name>1-deoxy-D-xylulose 5-phosphate</name>
        <dbReference type="ChEBI" id="CHEBI:57792"/>
    </ligand>
</feature>
<feature type="binding site" evidence="1">
    <location>
        <position position="209"/>
    </location>
    <ligand>
        <name>1-deoxy-D-xylulose 5-phosphate</name>
        <dbReference type="ChEBI" id="CHEBI:57792"/>
    </ligand>
</feature>
<feature type="binding site" evidence="1">
    <location>
        <position position="215"/>
    </location>
    <ligand>
        <name>NADPH</name>
        <dbReference type="ChEBI" id="CHEBI:57783"/>
    </ligand>
</feature>
<feature type="binding site" evidence="1">
    <location>
        <position position="222"/>
    </location>
    <ligand>
        <name>1-deoxy-D-xylulose 5-phosphate</name>
        <dbReference type="ChEBI" id="CHEBI:57792"/>
    </ligand>
</feature>
<feature type="binding site" evidence="1">
    <location>
        <position position="227"/>
    </location>
    <ligand>
        <name>1-deoxy-D-xylulose 5-phosphate</name>
        <dbReference type="ChEBI" id="CHEBI:57792"/>
    </ligand>
</feature>
<feature type="binding site" evidence="1">
    <location>
        <position position="228"/>
    </location>
    <ligand>
        <name>1-deoxy-D-xylulose 5-phosphate</name>
        <dbReference type="ChEBI" id="CHEBI:57792"/>
    </ligand>
</feature>
<feature type="binding site" evidence="1">
    <location>
        <position position="231"/>
    </location>
    <ligand>
        <name>1-deoxy-D-xylulose 5-phosphate</name>
        <dbReference type="ChEBI" id="CHEBI:57792"/>
    </ligand>
</feature>
<feature type="binding site" evidence="1">
    <location>
        <position position="231"/>
    </location>
    <ligand>
        <name>Mn(2+)</name>
        <dbReference type="ChEBI" id="CHEBI:29035"/>
    </ligand>
</feature>